<organism>
    <name type="scientific">Mycoplasma mobile (strain ATCC 43663 / 163K / NCTC 11711)</name>
    <name type="common">Mesomycoplasma mobile</name>
    <dbReference type="NCBI Taxonomy" id="267748"/>
    <lineage>
        <taxon>Bacteria</taxon>
        <taxon>Bacillati</taxon>
        <taxon>Mycoplasmatota</taxon>
        <taxon>Mycoplasmoidales</taxon>
        <taxon>Metamycoplasmataceae</taxon>
        <taxon>Mesomycoplasma</taxon>
    </lineage>
</organism>
<comment type="subcellular location">
    <subcellularLocation>
        <location evidence="1">Cell membrane</location>
        <topology evidence="1">Single-pass membrane protein</topology>
    </subcellularLocation>
</comment>
<comment type="similarity">
    <text evidence="1">Belongs to the UPF0154 family.</text>
</comment>
<proteinExistence type="inferred from homology"/>
<sequence>MEIGLAIGLIVGLSILFTIVGLVVGFFLTKRYFEKQLRENPPINEKMIRAMFLQMGRKPSESHIKSVMRSMKNAK</sequence>
<gene>
    <name type="ordered locus">MMOB4450</name>
</gene>
<feature type="chain" id="PRO_1000005635" description="UPF0154 protein MMOB4450">
    <location>
        <begin position="1"/>
        <end position="75"/>
    </location>
</feature>
<feature type="transmembrane region" description="Helical" evidence="1">
    <location>
        <begin position="7"/>
        <end position="27"/>
    </location>
</feature>
<dbReference type="EMBL" id="AE017308">
    <property type="protein sequence ID" value="AAT27931.1"/>
    <property type="molecule type" value="Genomic_DNA"/>
</dbReference>
<dbReference type="RefSeq" id="WP_011264965.1">
    <property type="nucleotide sequence ID" value="NC_006908.1"/>
</dbReference>
<dbReference type="SMR" id="Q6KHJ9"/>
<dbReference type="STRING" id="267748.MMOB4450"/>
<dbReference type="KEGG" id="mmo:MMOB4450"/>
<dbReference type="eggNOG" id="COG3763">
    <property type="taxonomic scope" value="Bacteria"/>
</dbReference>
<dbReference type="HOGENOM" id="CLU_180108_1_0_14"/>
<dbReference type="OrthoDB" id="1769076at2"/>
<dbReference type="Proteomes" id="UP000009072">
    <property type="component" value="Chromosome"/>
</dbReference>
<dbReference type="GO" id="GO:0005886">
    <property type="term" value="C:plasma membrane"/>
    <property type="evidence" value="ECO:0007669"/>
    <property type="project" value="UniProtKB-SubCell"/>
</dbReference>
<dbReference type="HAMAP" id="MF_00363">
    <property type="entry name" value="UPF0154"/>
    <property type="match status" value="1"/>
</dbReference>
<dbReference type="InterPro" id="IPR005359">
    <property type="entry name" value="UPF0154"/>
</dbReference>
<dbReference type="Pfam" id="PF03672">
    <property type="entry name" value="UPF0154"/>
    <property type="match status" value="1"/>
</dbReference>
<reference key="1">
    <citation type="journal article" date="2004" name="Genome Res.">
        <title>The complete genome and proteome of Mycoplasma mobile.</title>
        <authorList>
            <person name="Jaffe J.D."/>
            <person name="Stange-Thomann N."/>
            <person name="Smith C."/>
            <person name="DeCaprio D."/>
            <person name="Fisher S."/>
            <person name="Butler J."/>
            <person name="Calvo S."/>
            <person name="Elkins T."/>
            <person name="FitzGerald M.G."/>
            <person name="Hafez N."/>
            <person name="Kodira C.D."/>
            <person name="Major J."/>
            <person name="Wang S."/>
            <person name="Wilkinson J."/>
            <person name="Nicol R."/>
            <person name="Nusbaum C."/>
            <person name="Birren B."/>
            <person name="Berg H.C."/>
            <person name="Church G.M."/>
        </authorList>
    </citation>
    <scope>NUCLEOTIDE SEQUENCE [LARGE SCALE GENOMIC DNA]</scope>
    <source>
        <strain>ATCC 43663 / NCTC 11711 / 163 K</strain>
    </source>
</reference>
<protein>
    <recommendedName>
        <fullName evidence="1">UPF0154 protein MMOB4450</fullName>
    </recommendedName>
</protein>
<accession>Q6KHJ9</accession>
<keyword id="KW-1003">Cell membrane</keyword>
<keyword id="KW-0472">Membrane</keyword>
<keyword id="KW-1185">Reference proteome</keyword>
<keyword id="KW-0812">Transmembrane</keyword>
<keyword id="KW-1133">Transmembrane helix</keyword>
<evidence type="ECO:0000255" key="1">
    <source>
        <dbReference type="HAMAP-Rule" id="MF_00363"/>
    </source>
</evidence>
<name>Y4450_MYCM1</name>